<proteinExistence type="inferred from homology"/>
<gene>
    <name type="primary">CYP51</name>
</gene>
<evidence type="ECO:0000250" key="1"/>
<evidence type="ECO:0000250" key="2">
    <source>
        <dbReference type="UniProtKB" id="P10613"/>
    </source>
</evidence>
<evidence type="ECO:0000250" key="3">
    <source>
        <dbReference type="UniProtKB" id="P10614"/>
    </source>
</evidence>
<evidence type="ECO:0000250" key="4">
    <source>
        <dbReference type="UniProtKB" id="Q4WNT5"/>
    </source>
</evidence>
<evidence type="ECO:0000305" key="5"/>
<comment type="function">
    <text evidence="2 3 4">Sterol 14alpha-demethylase that plays a critical role in the third module of ergosterol biosynthesis pathway, being ergosterol the major sterol component in fungal membranes that participates in a variety of functions (By similarity). The third module or late pathway involves the ergosterol synthesis itself through consecutive reactions that mainly occur in the endoplasmic reticulum (ER) membrane (By similarity). In filamentous fungi, during the initial step of this module, lanosterol (lanosta-8,24-dien-3beta-ol) can be metabolized to eburicol (By similarity). Sterol 14alpha-demethylase catalyzes the three-step oxidative removal of the 14alpha-methyl group (C-32) of both these sterols in the form of formate, and converts eburicol and lanosterol to 14-demethyleburicol (4,4,24-trimethylergosta-8,14,24(28)-trienol) and 4,4-dimethyl-5alpha-cholesta-8,14,24-trien-3beta-ol, respectively, which are further metabolized by other enzymes in the pathway to ergosterol (By similarity). Can also use substrates not intrinsic to fungi, such as 24,25-dihydrolanosterol (DHL), producing 4,4-dimethyl-8,14-cholestadien-3-beta-ol, but at lower rates than the endogenous substrates (By similarity).</text>
</comment>
<comment type="catalytic activity">
    <reaction evidence="3">
        <text>a 14alpha-methyl steroid + 3 reduced [NADPH--hemoprotein reductase] + 3 O2 = a Delta(14) steroid + formate + 3 oxidized [NADPH--hemoprotein reductase] + 4 H2O + 4 H(+)</text>
        <dbReference type="Rhea" id="RHEA:54028"/>
        <dbReference type="Rhea" id="RHEA-COMP:11964"/>
        <dbReference type="Rhea" id="RHEA-COMP:11965"/>
        <dbReference type="ChEBI" id="CHEBI:15377"/>
        <dbReference type="ChEBI" id="CHEBI:15378"/>
        <dbReference type="ChEBI" id="CHEBI:15379"/>
        <dbReference type="ChEBI" id="CHEBI:15740"/>
        <dbReference type="ChEBI" id="CHEBI:57618"/>
        <dbReference type="ChEBI" id="CHEBI:58210"/>
        <dbReference type="ChEBI" id="CHEBI:138029"/>
        <dbReference type="ChEBI" id="CHEBI:138031"/>
        <dbReference type="EC" id="1.14.14.154"/>
    </reaction>
    <physiologicalReaction direction="left-to-right" evidence="3">
        <dbReference type="Rhea" id="RHEA:54029"/>
    </physiologicalReaction>
</comment>
<comment type="catalytic activity">
    <reaction evidence="3">
        <text>a 14alpha-methyl steroid + reduced [NADPH--hemoprotein reductase] + O2 = a 14alpha-hydroxymethyl steroid + oxidized [NADPH--hemoprotein reductase] + H2O + H(+)</text>
        <dbReference type="Rhea" id="RHEA:68060"/>
        <dbReference type="Rhea" id="RHEA-COMP:11964"/>
        <dbReference type="Rhea" id="RHEA-COMP:11965"/>
        <dbReference type="ChEBI" id="CHEBI:15377"/>
        <dbReference type="ChEBI" id="CHEBI:15378"/>
        <dbReference type="ChEBI" id="CHEBI:15379"/>
        <dbReference type="ChEBI" id="CHEBI:57618"/>
        <dbReference type="ChEBI" id="CHEBI:58210"/>
        <dbReference type="ChEBI" id="CHEBI:138029"/>
        <dbReference type="ChEBI" id="CHEBI:176901"/>
    </reaction>
    <physiologicalReaction direction="left-to-right" evidence="3">
        <dbReference type="Rhea" id="RHEA:68061"/>
    </physiologicalReaction>
</comment>
<comment type="catalytic activity">
    <reaction evidence="3">
        <text>a 14alpha-hydroxymethyl steroid + reduced [NADPH--hemoprotein reductase] + O2 = a 14alpha-formyl steroid + oxidized [NADPH--hemoprotein reductase] + 2 H2O + H(+)</text>
        <dbReference type="Rhea" id="RHEA:68064"/>
        <dbReference type="Rhea" id="RHEA-COMP:11964"/>
        <dbReference type="Rhea" id="RHEA-COMP:11965"/>
        <dbReference type="ChEBI" id="CHEBI:15377"/>
        <dbReference type="ChEBI" id="CHEBI:15378"/>
        <dbReference type="ChEBI" id="CHEBI:15379"/>
        <dbReference type="ChEBI" id="CHEBI:57618"/>
        <dbReference type="ChEBI" id="CHEBI:58210"/>
        <dbReference type="ChEBI" id="CHEBI:176901"/>
        <dbReference type="ChEBI" id="CHEBI:176902"/>
    </reaction>
    <physiologicalReaction direction="left-to-right" evidence="3">
        <dbReference type="Rhea" id="RHEA:68065"/>
    </physiologicalReaction>
</comment>
<comment type="catalytic activity">
    <reaction evidence="3">
        <text>a 14alpha-formyl steroid + reduced [NADPH--hemoprotein reductase] + O2 = a Delta(14) steroid + formate + oxidized [NADPH--hemoprotein reductase] + H2O + 2 H(+)</text>
        <dbReference type="Rhea" id="RHEA:68068"/>
        <dbReference type="Rhea" id="RHEA-COMP:11964"/>
        <dbReference type="Rhea" id="RHEA-COMP:11965"/>
        <dbReference type="ChEBI" id="CHEBI:15377"/>
        <dbReference type="ChEBI" id="CHEBI:15378"/>
        <dbReference type="ChEBI" id="CHEBI:15379"/>
        <dbReference type="ChEBI" id="CHEBI:15740"/>
        <dbReference type="ChEBI" id="CHEBI:57618"/>
        <dbReference type="ChEBI" id="CHEBI:58210"/>
        <dbReference type="ChEBI" id="CHEBI:138031"/>
        <dbReference type="ChEBI" id="CHEBI:176902"/>
    </reaction>
    <physiologicalReaction direction="left-to-right" evidence="3">
        <dbReference type="Rhea" id="RHEA:68069"/>
    </physiologicalReaction>
</comment>
<comment type="catalytic activity">
    <reaction evidence="3">
        <text>lanosterol + 3 reduced [NADPH--hemoprotein reductase] + 3 O2 = 4,4-dimethyl-5alpha-cholesta-8,14,24-trien-3beta-ol + formate + 3 oxidized [NADPH--hemoprotein reductase] + 4 H2O + 4 H(+)</text>
        <dbReference type="Rhea" id="RHEA:25286"/>
        <dbReference type="Rhea" id="RHEA-COMP:11964"/>
        <dbReference type="Rhea" id="RHEA-COMP:11965"/>
        <dbReference type="ChEBI" id="CHEBI:15377"/>
        <dbReference type="ChEBI" id="CHEBI:15378"/>
        <dbReference type="ChEBI" id="CHEBI:15379"/>
        <dbReference type="ChEBI" id="CHEBI:15740"/>
        <dbReference type="ChEBI" id="CHEBI:16521"/>
        <dbReference type="ChEBI" id="CHEBI:17813"/>
        <dbReference type="ChEBI" id="CHEBI:57618"/>
        <dbReference type="ChEBI" id="CHEBI:58210"/>
        <dbReference type="EC" id="1.14.14.154"/>
    </reaction>
    <physiologicalReaction direction="left-to-right" evidence="3">
        <dbReference type="Rhea" id="RHEA:25287"/>
    </physiologicalReaction>
</comment>
<comment type="catalytic activity">
    <reaction evidence="3">
        <text>lanosterol + reduced [NADPH--hemoprotein reductase] + O2 = 32-hydroxylanosterol + oxidized [NADPH--hemoprotein reductase] + H2O + H(+)</text>
        <dbReference type="Rhea" id="RHEA:75103"/>
        <dbReference type="Rhea" id="RHEA-COMP:11964"/>
        <dbReference type="Rhea" id="RHEA-COMP:11965"/>
        <dbReference type="ChEBI" id="CHEBI:15377"/>
        <dbReference type="ChEBI" id="CHEBI:15378"/>
        <dbReference type="ChEBI" id="CHEBI:15379"/>
        <dbReference type="ChEBI" id="CHEBI:16521"/>
        <dbReference type="ChEBI" id="CHEBI:57618"/>
        <dbReference type="ChEBI" id="CHEBI:58210"/>
        <dbReference type="ChEBI" id="CHEBI:166806"/>
    </reaction>
    <physiologicalReaction direction="left-to-right" evidence="3">
        <dbReference type="Rhea" id="RHEA:75104"/>
    </physiologicalReaction>
</comment>
<comment type="catalytic activity">
    <reaction evidence="3">
        <text>32-hydroxylanosterol + reduced [NADPH--hemoprotein reductase] + O2 = 32-oxolanosterol + oxidized [NADPH--hemoprotein reductase] + 2 H2O + H(+)</text>
        <dbReference type="Rhea" id="RHEA:75107"/>
        <dbReference type="Rhea" id="RHEA-COMP:11964"/>
        <dbReference type="Rhea" id="RHEA-COMP:11965"/>
        <dbReference type="ChEBI" id="CHEBI:15377"/>
        <dbReference type="ChEBI" id="CHEBI:15378"/>
        <dbReference type="ChEBI" id="CHEBI:15379"/>
        <dbReference type="ChEBI" id="CHEBI:57618"/>
        <dbReference type="ChEBI" id="CHEBI:58210"/>
        <dbReference type="ChEBI" id="CHEBI:166681"/>
        <dbReference type="ChEBI" id="CHEBI:166806"/>
    </reaction>
    <physiologicalReaction direction="left-to-right" evidence="3">
        <dbReference type="Rhea" id="RHEA:75108"/>
    </physiologicalReaction>
</comment>
<comment type="catalytic activity">
    <reaction evidence="3">
        <text>32-oxolanosterol + reduced [NADPH--hemoprotein reductase] + O2 = 4,4-dimethyl-5alpha-cholesta-8,14,24-trien-3beta-ol + formate + oxidized [NADPH--hemoprotein reductase] + H2O + 2 H(+)</text>
        <dbReference type="Rhea" id="RHEA:75111"/>
        <dbReference type="Rhea" id="RHEA-COMP:11964"/>
        <dbReference type="Rhea" id="RHEA-COMP:11965"/>
        <dbReference type="ChEBI" id="CHEBI:15377"/>
        <dbReference type="ChEBI" id="CHEBI:15378"/>
        <dbReference type="ChEBI" id="CHEBI:15379"/>
        <dbReference type="ChEBI" id="CHEBI:15740"/>
        <dbReference type="ChEBI" id="CHEBI:17813"/>
        <dbReference type="ChEBI" id="CHEBI:57618"/>
        <dbReference type="ChEBI" id="CHEBI:58210"/>
        <dbReference type="ChEBI" id="CHEBI:166681"/>
    </reaction>
    <physiologicalReaction direction="left-to-right" evidence="3">
        <dbReference type="Rhea" id="RHEA:75112"/>
    </physiologicalReaction>
</comment>
<comment type="catalytic activity">
    <reaction evidence="2">
        <text>eburicol + 3 reduced [NADPH--hemoprotein reductase] + 3 O2 = 14-demethyleburicol + formate + 3 oxidized [NADPH--hemoprotein reductase] + 4 H2O + 4 H(+)</text>
        <dbReference type="Rhea" id="RHEA:75439"/>
        <dbReference type="Rhea" id="RHEA-COMP:11964"/>
        <dbReference type="Rhea" id="RHEA-COMP:11965"/>
        <dbReference type="ChEBI" id="CHEBI:15377"/>
        <dbReference type="ChEBI" id="CHEBI:15378"/>
        <dbReference type="ChEBI" id="CHEBI:15379"/>
        <dbReference type="ChEBI" id="CHEBI:15740"/>
        <dbReference type="ChEBI" id="CHEBI:57618"/>
        <dbReference type="ChEBI" id="CHEBI:58210"/>
        <dbReference type="ChEBI" id="CHEBI:70315"/>
        <dbReference type="ChEBI" id="CHEBI:194330"/>
    </reaction>
    <physiologicalReaction direction="left-to-right" evidence="2">
        <dbReference type="Rhea" id="RHEA:75440"/>
    </physiologicalReaction>
</comment>
<comment type="catalytic activity">
    <reaction evidence="3">
        <text>eburicol + reduced [NADPH--hemoprotein reductase] + O2 = 32-hydroxyeburicol + oxidized [NADPH--hemoprotein reductase] + H2O + H(+)</text>
        <dbReference type="Rhea" id="RHEA:75427"/>
        <dbReference type="Rhea" id="RHEA-COMP:11964"/>
        <dbReference type="Rhea" id="RHEA-COMP:11965"/>
        <dbReference type="ChEBI" id="CHEBI:15377"/>
        <dbReference type="ChEBI" id="CHEBI:15378"/>
        <dbReference type="ChEBI" id="CHEBI:15379"/>
        <dbReference type="ChEBI" id="CHEBI:57618"/>
        <dbReference type="ChEBI" id="CHEBI:58210"/>
        <dbReference type="ChEBI" id="CHEBI:70315"/>
        <dbReference type="ChEBI" id="CHEBI:194328"/>
    </reaction>
    <physiologicalReaction direction="left-to-right" evidence="3">
        <dbReference type="Rhea" id="RHEA:75428"/>
    </physiologicalReaction>
</comment>
<comment type="catalytic activity">
    <reaction evidence="3">
        <text>32-hydroxyeburicol + reduced [NADPH--hemoprotein reductase] + O2 = 32-oxoeburicol + oxidized [NADPH--hemoprotein reductase] + 2 H2O + H(+)</text>
        <dbReference type="Rhea" id="RHEA:75431"/>
        <dbReference type="Rhea" id="RHEA-COMP:11964"/>
        <dbReference type="Rhea" id="RHEA-COMP:11965"/>
        <dbReference type="ChEBI" id="CHEBI:15377"/>
        <dbReference type="ChEBI" id="CHEBI:15378"/>
        <dbReference type="ChEBI" id="CHEBI:15379"/>
        <dbReference type="ChEBI" id="CHEBI:57618"/>
        <dbReference type="ChEBI" id="CHEBI:58210"/>
        <dbReference type="ChEBI" id="CHEBI:194328"/>
        <dbReference type="ChEBI" id="CHEBI:194329"/>
    </reaction>
    <physiologicalReaction direction="left-to-right" evidence="3">
        <dbReference type="Rhea" id="RHEA:75432"/>
    </physiologicalReaction>
</comment>
<comment type="catalytic activity">
    <reaction evidence="3">
        <text>32-oxoeburicol + reduced [NADPH--hemoprotein reductase] + O2 = 14-demethyleburicol + formate + oxidized [NADPH--hemoprotein reductase] + H2O + 2 H(+)</text>
        <dbReference type="Rhea" id="RHEA:75435"/>
        <dbReference type="Rhea" id="RHEA-COMP:11964"/>
        <dbReference type="Rhea" id="RHEA-COMP:11965"/>
        <dbReference type="ChEBI" id="CHEBI:15377"/>
        <dbReference type="ChEBI" id="CHEBI:15378"/>
        <dbReference type="ChEBI" id="CHEBI:15379"/>
        <dbReference type="ChEBI" id="CHEBI:15740"/>
        <dbReference type="ChEBI" id="CHEBI:57618"/>
        <dbReference type="ChEBI" id="CHEBI:58210"/>
        <dbReference type="ChEBI" id="CHEBI:194329"/>
        <dbReference type="ChEBI" id="CHEBI:194330"/>
    </reaction>
    <physiologicalReaction direction="left-to-right" evidence="3">
        <dbReference type="Rhea" id="RHEA:75436"/>
    </physiologicalReaction>
</comment>
<comment type="cofactor">
    <cofactor evidence="1">
        <name>heme</name>
        <dbReference type="ChEBI" id="CHEBI:30413"/>
    </cofactor>
</comment>
<comment type="pathway">
    <text>Steroid biosynthesis; zymosterol biosynthesis; zymosterol from lanosterol: step 1/6.</text>
</comment>
<comment type="subcellular location">
    <subcellularLocation>
        <location evidence="5">Membrane</location>
    </subcellularLocation>
</comment>
<comment type="similarity">
    <text evidence="5">Belongs to the cytochrome P450 family.</text>
</comment>
<organism>
    <name type="scientific">Cunninghamella elegans</name>
    <dbReference type="NCBI Taxonomy" id="4853"/>
    <lineage>
        <taxon>Eukaryota</taxon>
        <taxon>Fungi</taxon>
        <taxon>Fungi incertae sedis</taxon>
        <taxon>Mucoromycota</taxon>
        <taxon>Mucoromycotina</taxon>
        <taxon>Mucoromycetes</taxon>
        <taxon>Mucorales</taxon>
        <taxon>Cunninghamellaceae</taxon>
        <taxon>Cunninghamella</taxon>
    </lineage>
</organism>
<dbReference type="EC" id="1.14.14.154"/>
<dbReference type="EMBL" id="AF046863">
    <property type="protein sequence ID" value="AAF20263.1"/>
    <property type="molecule type" value="Genomic_DNA"/>
</dbReference>
<dbReference type="SMR" id="Q9UVC3"/>
<dbReference type="UniPathway" id="UPA00770">
    <property type="reaction ID" value="UER00754"/>
</dbReference>
<dbReference type="GO" id="GO:0016020">
    <property type="term" value="C:membrane"/>
    <property type="evidence" value="ECO:0007669"/>
    <property type="project" value="UniProtKB-SubCell"/>
</dbReference>
<dbReference type="GO" id="GO:0020037">
    <property type="term" value="F:heme binding"/>
    <property type="evidence" value="ECO:0007669"/>
    <property type="project" value="InterPro"/>
</dbReference>
<dbReference type="GO" id="GO:0005506">
    <property type="term" value="F:iron ion binding"/>
    <property type="evidence" value="ECO:0007669"/>
    <property type="project" value="InterPro"/>
</dbReference>
<dbReference type="GO" id="GO:0008398">
    <property type="term" value="F:sterol 14-demethylase activity"/>
    <property type="evidence" value="ECO:0007669"/>
    <property type="project" value="UniProtKB-EC"/>
</dbReference>
<dbReference type="GO" id="GO:0016126">
    <property type="term" value="P:sterol biosynthetic process"/>
    <property type="evidence" value="ECO:0007669"/>
    <property type="project" value="UniProtKB-KW"/>
</dbReference>
<dbReference type="CDD" id="cd11042">
    <property type="entry name" value="CYP51-like"/>
    <property type="match status" value="1"/>
</dbReference>
<dbReference type="Gene3D" id="1.10.630.10">
    <property type="entry name" value="Cytochrome P450"/>
    <property type="match status" value="1"/>
</dbReference>
<dbReference type="InterPro" id="IPR050529">
    <property type="entry name" value="CYP450_sterol_14alpha_dmase"/>
</dbReference>
<dbReference type="InterPro" id="IPR001128">
    <property type="entry name" value="Cyt_P450"/>
</dbReference>
<dbReference type="InterPro" id="IPR017972">
    <property type="entry name" value="Cyt_P450_CS"/>
</dbReference>
<dbReference type="InterPro" id="IPR002403">
    <property type="entry name" value="Cyt_P450_E_grp-IV"/>
</dbReference>
<dbReference type="InterPro" id="IPR036396">
    <property type="entry name" value="Cyt_P450_sf"/>
</dbReference>
<dbReference type="PANTHER" id="PTHR24304:SF2">
    <property type="entry name" value="24-HYDROXYCHOLESTEROL 7-ALPHA-HYDROXYLASE"/>
    <property type="match status" value="1"/>
</dbReference>
<dbReference type="PANTHER" id="PTHR24304">
    <property type="entry name" value="CYTOCHROME P450 FAMILY 7"/>
    <property type="match status" value="1"/>
</dbReference>
<dbReference type="Pfam" id="PF00067">
    <property type="entry name" value="p450"/>
    <property type="match status" value="1"/>
</dbReference>
<dbReference type="PRINTS" id="PR00465">
    <property type="entry name" value="EP450IV"/>
</dbReference>
<dbReference type="PRINTS" id="PR00385">
    <property type="entry name" value="P450"/>
</dbReference>
<dbReference type="SUPFAM" id="SSF48264">
    <property type="entry name" value="Cytochrome P450"/>
    <property type="match status" value="1"/>
</dbReference>
<dbReference type="PROSITE" id="PS00086">
    <property type="entry name" value="CYTOCHROME_P450"/>
    <property type="match status" value="1"/>
</dbReference>
<feature type="chain" id="PRO_0000052006" description="Lanosterol 14-alpha demethylase">
    <location>
        <begin position="1"/>
        <end position="512"/>
    </location>
</feature>
<feature type="binding site" description="axial binding residue" evidence="1">
    <location>
        <position position="458"/>
    </location>
    <ligand>
        <name>heme</name>
        <dbReference type="ChEBI" id="CHEBI:30413"/>
    </ligand>
    <ligandPart>
        <name>Fe</name>
        <dbReference type="ChEBI" id="CHEBI:18248"/>
    </ligandPart>
</feature>
<accession>Q9UVC3</accession>
<protein>
    <recommendedName>
        <fullName>Lanosterol 14-alpha demethylase</fullName>
        <ecNumber>1.14.14.154</ecNumber>
    </recommendedName>
    <alternativeName>
        <fullName>CYPLI</fullName>
    </alternativeName>
    <alternativeName>
        <fullName>Cytochrome P450 51</fullName>
    </alternativeName>
    <alternativeName>
        <fullName>Cytochrome P450-14DM</fullName>
    </alternativeName>
    <alternativeName>
        <fullName>Cytochrome P450-LIA1</fullName>
    </alternativeName>
    <alternativeName>
        <fullName>Sterol 14-alpha demethylase</fullName>
    </alternativeName>
</protein>
<keyword id="KW-0349">Heme</keyword>
<keyword id="KW-0408">Iron</keyword>
<keyword id="KW-0444">Lipid biosynthesis</keyword>
<keyword id="KW-0443">Lipid metabolism</keyword>
<keyword id="KW-0472">Membrane</keyword>
<keyword id="KW-0479">Metal-binding</keyword>
<keyword id="KW-0503">Monooxygenase</keyword>
<keyword id="KW-0560">Oxidoreductase</keyword>
<keyword id="KW-0752">Steroid biosynthesis</keyword>
<keyword id="KW-0753">Steroid metabolism</keyword>
<keyword id="KW-0756">Sterol biosynthesis</keyword>
<keyword id="KW-1207">Sterol metabolism</keyword>
<name>CP51_CUNEL</name>
<sequence length="512" mass="57677">MAIVSQISRFITFTIISMGYSVLAVGVALTIHILSQLIVPKNPNEPPNVFSLIPVLGNAVQFGMNPVAFLQECQKKYGDVFTFTMVGKRVTVCLGADGNQFVFNSKQNLSSAAEAYNHMTKYVFGPDVVYDAPHAVFMEQKKFIKAGLNSDCFRQHVPMIVQETEEFFKKFNKPTGFIEAYETFGSLIIYTASRCLMGKEIRASLDGNVAKLYYDLDQGFKPINFIFPNLPLPSYRRRDVACKKMADLYSSIIQRRKDEKDNNNADLLQALMDATYKDGTHIPDHHIAGMMIAVLFGGQHTSATTSAWTILELANRPDIIKALREEQIEKLGSLKADLTFDNLKDLPLLEAAIRETLRLHPPIFQMMRRVVADKIVYEKNGMEIPKGNFICAAPGVTQVDPTYFNEPTTYNPYRWIEKTDPVHQLEQGDDANIDYGFGAVGISSKSPFLPFGAGRHRCIGEQFGYLQLKTVISTFIRTFDFDLDGKSVPKSDYTSMVVVPEHTAKVRYTWRE</sequence>
<reference key="1">
    <citation type="submission" date="1998-02" db="EMBL/GenBank/DDBJ databases">
        <authorList>
            <person name="Craft D.L."/>
            <person name="Loper J.C."/>
        </authorList>
    </citation>
    <scope>NUCLEOTIDE SEQUENCE [GENOMIC DNA]</scope>
    <source>
        <strain>ATCC 36112 / DSM 8217 / PA-1</strain>
    </source>
</reference>